<organism>
    <name type="scientific">Pseudoalteromonas translucida (strain TAC 125)</name>
    <dbReference type="NCBI Taxonomy" id="326442"/>
    <lineage>
        <taxon>Bacteria</taxon>
        <taxon>Pseudomonadati</taxon>
        <taxon>Pseudomonadota</taxon>
        <taxon>Gammaproteobacteria</taxon>
        <taxon>Alteromonadales</taxon>
        <taxon>Pseudoalteromonadaceae</taxon>
        <taxon>Pseudoalteromonas</taxon>
    </lineage>
</organism>
<protein>
    <recommendedName>
        <fullName evidence="1">Uracil phosphoribosyltransferase</fullName>
        <ecNumber evidence="1">2.4.2.9</ecNumber>
    </recommendedName>
    <alternativeName>
        <fullName evidence="1">UMP pyrophosphorylase</fullName>
    </alternativeName>
    <alternativeName>
        <fullName evidence="1">UPRTase</fullName>
    </alternativeName>
</protein>
<feature type="chain" id="PRO_1000053763" description="Uracil phosphoribosyltransferase">
    <location>
        <begin position="1"/>
        <end position="209"/>
    </location>
</feature>
<feature type="binding site" evidence="1">
    <location>
        <position position="79"/>
    </location>
    <ligand>
        <name>5-phospho-alpha-D-ribose 1-diphosphate</name>
        <dbReference type="ChEBI" id="CHEBI:58017"/>
    </ligand>
</feature>
<feature type="binding site" evidence="1">
    <location>
        <position position="104"/>
    </location>
    <ligand>
        <name>5-phospho-alpha-D-ribose 1-diphosphate</name>
        <dbReference type="ChEBI" id="CHEBI:58017"/>
    </ligand>
</feature>
<feature type="binding site" evidence="1">
    <location>
        <begin position="131"/>
        <end position="139"/>
    </location>
    <ligand>
        <name>5-phospho-alpha-D-ribose 1-diphosphate</name>
        <dbReference type="ChEBI" id="CHEBI:58017"/>
    </ligand>
</feature>
<feature type="binding site" evidence="1">
    <location>
        <position position="194"/>
    </location>
    <ligand>
        <name>uracil</name>
        <dbReference type="ChEBI" id="CHEBI:17568"/>
    </ligand>
</feature>
<feature type="binding site" evidence="1">
    <location>
        <begin position="199"/>
        <end position="201"/>
    </location>
    <ligand>
        <name>uracil</name>
        <dbReference type="ChEBI" id="CHEBI:17568"/>
    </ligand>
</feature>
<feature type="binding site" evidence="1">
    <location>
        <position position="200"/>
    </location>
    <ligand>
        <name>5-phospho-alpha-D-ribose 1-diphosphate</name>
        <dbReference type="ChEBI" id="CHEBI:58017"/>
    </ligand>
</feature>
<comment type="function">
    <text evidence="1">Catalyzes the conversion of uracil and 5-phospho-alpha-D-ribose 1-diphosphate (PRPP) to UMP and diphosphate.</text>
</comment>
<comment type="catalytic activity">
    <reaction evidence="1">
        <text>UMP + diphosphate = 5-phospho-alpha-D-ribose 1-diphosphate + uracil</text>
        <dbReference type="Rhea" id="RHEA:13017"/>
        <dbReference type="ChEBI" id="CHEBI:17568"/>
        <dbReference type="ChEBI" id="CHEBI:33019"/>
        <dbReference type="ChEBI" id="CHEBI:57865"/>
        <dbReference type="ChEBI" id="CHEBI:58017"/>
        <dbReference type="EC" id="2.4.2.9"/>
    </reaction>
</comment>
<comment type="cofactor">
    <cofactor evidence="1">
        <name>Mg(2+)</name>
        <dbReference type="ChEBI" id="CHEBI:18420"/>
    </cofactor>
    <text evidence="1">Binds 1 Mg(2+) ion per subunit. The magnesium is bound as Mg-PRPP.</text>
</comment>
<comment type="activity regulation">
    <text evidence="1">Allosterically activated by GTP.</text>
</comment>
<comment type="pathway">
    <text evidence="1">Pyrimidine metabolism; UMP biosynthesis via salvage pathway; UMP from uracil: step 1/1.</text>
</comment>
<comment type="similarity">
    <text evidence="1">Belongs to the UPRTase family.</text>
</comment>
<evidence type="ECO:0000255" key="1">
    <source>
        <dbReference type="HAMAP-Rule" id="MF_01218"/>
    </source>
</evidence>
<keyword id="KW-0021">Allosteric enzyme</keyword>
<keyword id="KW-0328">Glycosyltransferase</keyword>
<keyword id="KW-0342">GTP-binding</keyword>
<keyword id="KW-0460">Magnesium</keyword>
<keyword id="KW-0547">Nucleotide-binding</keyword>
<keyword id="KW-1185">Reference proteome</keyword>
<keyword id="KW-0808">Transferase</keyword>
<name>UPP_PSET1</name>
<accession>Q3IC38</accession>
<sequence>MAIHVITHPLVQHKLGLMRSHGISTKSFRELCSEVGTLLTYEATQNLPLEDNEITSWDGTKLNVQHIKGKKITVVPILRAGLGMMDGVMQLLPAAKVSVVGLERNEETLEPIPYFEKLVSNINERLSLVIDPMLATGGTMIATIDMLKKAGCKEIKVIVLVAAPEGVEKTLAAHPDVEIYTASVDSHLNDKGYIVPGLGDAGDKIFGTV</sequence>
<proteinExistence type="inferred from homology"/>
<gene>
    <name evidence="1" type="primary">upp</name>
    <name type="ordered locus">PSHAb0377</name>
</gene>
<reference key="1">
    <citation type="journal article" date="2005" name="Genome Res.">
        <title>Coping with cold: the genome of the versatile marine Antarctica bacterium Pseudoalteromonas haloplanktis TAC125.</title>
        <authorList>
            <person name="Medigue C."/>
            <person name="Krin E."/>
            <person name="Pascal G."/>
            <person name="Barbe V."/>
            <person name="Bernsel A."/>
            <person name="Bertin P.N."/>
            <person name="Cheung F."/>
            <person name="Cruveiller S."/>
            <person name="D'Amico S."/>
            <person name="Duilio A."/>
            <person name="Fang G."/>
            <person name="Feller G."/>
            <person name="Ho C."/>
            <person name="Mangenot S."/>
            <person name="Marino G."/>
            <person name="Nilsson J."/>
            <person name="Parrilli E."/>
            <person name="Rocha E.P.C."/>
            <person name="Rouy Z."/>
            <person name="Sekowska A."/>
            <person name="Tutino M.L."/>
            <person name="Vallenet D."/>
            <person name="von Heijne G."/>
            <person name="Danchin A."/>
        </authorList>
    </citation>
    <scope>NUCLEOTIDE SEQUENCE [LARGE SCALE GENOMIC DNA]</scope>
    <source>
        <strain>TAC 125</strain>
    </source>
</reference>
<dbReference type="EC" id="2.4.2.9" evidence="1"/>
<dbReference type="EMBL" id="CR954247">
    <property type="protein sequence ID" value="CAI89416.1"/>
    <property type="molecule type" value="Genomic_DNA"/>
</dbReference>
<dbReference type="SMR" id="Q3IC38"/>
<dbReference type="STRING" id="326442.PSHAb0377"/>
<dbReference type="KEGG" id="pha:PSHAb0377"/>
<dbReference type="PATRIC" id="fig|326442.8.peg.3286"/>
<dbReference type="eggNOG" id="COG0035">
    <property type="taxonomic scope" value="Bacteria"/>
</dbReference>
<dbReference type="HOGENOM" id="CLU_067096_2_2_6"/>
<dbReference type="BioCyc" id="PHAL326442:PSHA_RS16670-MONOMER"/>
<dbReference type="UniPathway" id="UPA00574">
    <property type="reaction ID" value="UER00636"/>
</dbReference>
<dbReference type="Proteomes" id="UP000006843">
    <property type="component" value="Chromosome II"/>
</dbReference>
<dbReference type="GO" id="GO:0005525">
    <property type="term" value="F:GTP binding"/>
    <property type="evidence" value="ECO:0007669"/>
    <property type="project" value="UniProtKB-KW"/>
</dbReference>
<dbReference type="GO" id="GO:0000287">
    <property type="term" value="F:magnesium ion binding"/>
    <property type="evidence" value="ECO:0007669"/>
    <property type="project" value="UniProtKB-UniRule"/>
</dbReference>
<dbReference type="GO" id="GO:0004845">
    <property type="term" value="F:uracil phosphoribosyltransferase activity"/>
    <property type="evidence" value="ECO:0007669"/>
    <property type="project" value="UniProtKB-UniRule"/>
</dbReference>
<dbReference type="GO" id="GO:0044206">
    <property type="term" value="P:UMP salvage"/>
    <property type="evidence" value="ECO:0007669"/>
    <property type="project" value="UniProtKB-UniRule"/>
</dbReference>
<dbReference type="GO" id="GO:0006223">
    <property type="term" value="P:uracil salvage"/>
    <property type="evidence" value="ECO:0007669"/>
    <property type="project" value="InterPro"/>
</dbReference>
<dbReference type="CDD" id="cd06223">
    <property type="entry name" value="PRTases_typeI"/>
    <property type="match status" value="1"/>
</dbReference>
<dbReference type="FunFam" id="3.40.50.2020:FF:000003">
    <property type="entry name" value="Uracil phosphoribosyltransferase"/>
    <property type="match status" value="1"/>
</dbReference>
<dbReference type="Gene3D" id="3.40.50.2020">
    <property type="match status" value="1"/>
</dbReference>
<dbReference type="HAMAP" id="MF_01218_B">
    <property type="entry name" value="Upp_B"/>
    <property type="match status" value="1"/>
</dbReference>
<dbReference type="InterPro" id="IPR000836">
    <property type="entry name" value="PRibTrfase_dom"/>
</dbReference>
<dbReference type="InterPro" id="IPR029057">
    <property type="entry name" value="PRTase-like"/>
</dbReference>
<dbReference type="InterPro" id="IPR034332">
    <property type="entry name" value="Upp_B"/>
</dbReference>
<dbReference type="InterPro" id="IPR050054">
    <property type="entry name" value="UPRTase/APRTase"/>
</dbReference>
<dbReference type="InterPro" id="IPR005765">
    <property type="entry name" value="Ura_phspho_trans"/>
</dbReference>
<dbReference type="NCBIfam" id="NF001097">
    <property type="entry name" value="PRK00129.1"/>
    <property type="match status" value="1"/>
</dbReference>
<dbReference type="NCBIfam" id="TIGR01091">
    <property type="entry name" value="upp"/>
    <property type="match status" value="1"/>
</dbReference>
<dbReference type="PANTHER" id="PTHR32315">
    <property type="entry name" value="ADENINE PHOSPHORIBOSYLTRANSFERASE"/>
    <property type="match status" value="1"/>
</dbReference>
<dbReference type="PANTHER" id="PTHR32315:SF4">
    <property type="entry name" value="URACIL PHOSPHORIBOSYLTRANSFERASE, CHLOROPLASTIC"/>
    <property type="match status" value="1"/>
</dbReference>
<dbReference type="Pfam" id="PF14681">
    <property type="entry name" value="UPRTase"/>
    <property type="match status" value="1"/>
</dbReference>
<dbReference type="SUPFAM" id="SSF53271">
    <property type="entry name" value="PRTase-like"/>
    <property type="match status" value="1"/>
</dbReference>